<gene>
    <name evidence="9" type="primary">OYE1</name>
</gene>
<name>OYE1_SACPS</name>
<accession>Q02899</accession>
<protein>
    <recommendedName>
        <fullName evidence="9">NADPH dehydrogenase 1</fullName>
        <ecNumber evidence="11">1.6.99.1</ecNumber>
    </recommendedName>
    <alternativeName>
        <fullName evidence="9">Old yellow enzyme 1</fullName>
    </alternativeName>
</protein>
<sequence>MSFVKDFKPQALGDTNLFKPIKIGNNELLHRAVIPPLTRMRALHPGNIPNRDWAVEYYTQRAQRPGTMIITEGAFISPQAGGYDNAPGVWSEEQMVEWTKIFNAIHEKKSFVWVQLWVLGWAAFPDNLARDGLRYDSASDNVFMDAEQEAKAKKANNPQHSLTKDEIKQYIKEYVQAAKNSIAAGADGVEIHSANGYLLNQFLDPHSNTRTDEYGGSIENRARFTLEVVDALVEAIGHEKVGLRLSPYGVFNSMSGGAETGIVAQYAYVAGELEKRAKAGKRLAFVHLVEPRVTNPFLTEGEGEYEGGSNDFVYSIWKGPVIRAGNFALHPEVVREEVKDKRTLIGYGRFFISNPDLVDRLEKGLPLNKYDRDTFYQMSAHGYIDYPTYEEALKLGWDKK</sequence>
<proteinExistence type="evidence at protein level"/>
<evidence type="ECO:0000269" key="1">
    <source>
    </source>
</evidence>
<evidence type="ECO:0000269" key="2">
    <source>
    </source>
</evidence>
<evidence type="ECO:0000269" key="3">
    <source>
    </source>
</evidence>
<evidence type="ECO:0000269" key="4">
    <source>
    </source>
</evidence>
<evidence type="ECO:0000269" key="5">
    <source>
    </source>
</evidence>
<evidence type="ECO:0000269" key="6">
    <source>
    </source>
</evidence>
<evidence type="ECO:0000269" key="7">
    <source>
    </source>
</evidence>
<evidence type="ECO:0000269" key="8">
    <source>
    </source>
</evidence>
<evidence type="ECO:0000303" key="9">
    <source>
    </source>
</evidence>
<evidence type="ECO:0000305" key="10"/>
<evidence type="ECO:0000305" key="11">
    <source>
    </source>
</evidence>
<evidence type="ECO:0000305" key="12">
    <source>
    </source>
</evidence>
<evidence type="ECO:0007829" key="13">
    <source>
        <dbReference type="PDB" id="1K02"/>
    </source>
</evidence>
<evidence type="ECO:0007829" key="14">
    <source>
        <dbReference type="PDB" id="4GBU"/>
    </source>
</evidence>
<evidence type="ECO:0007829" key="15">
    <source>
        <dbReference type="PDB" id="4GE8"/>
    </source>
</evidence>
<evidence type="ECO:0007829" key="16">
    <source>
        <dbReference type="PDB" id="4RNU"/>
    </source>
</evidence>
<evidence type="ECO:0007829" key="17">
    <source>
        <dbReference type="PDB" id="4RNX"/>
    </source>
</evidence>
<dbReference type="EC" id="1.6.99.1" evidence="11"/>
<dbReference type="EMBL" id="X53597">
    <property type="protein sequence ID" value="CAA37666.1"/>
    <property type="molecule type" value="Genomic_DNA"/>
</dbReference>
<dbReference type="PIR" id="A39495">
    <property type="entry name" value="A39495"/>
</dbReference>
<dbReference type="PDB" id="1BWK">
    <property type="method" value="X-ray"/>
    <property type="resolution" value="2.30 A"/>
    <property type="chains" value="A=2-399"/>
</dbReference>
<dbReference type="PDB" id="1BWL">
    <property type="method" value="X-ray"/>
    <property type="resolution" value="2.70 A"/>
    <property type="chains" value="A=2-399"/>
</dbReference>
<dbReference type="PDB" id="1K02">
    <property type="method" value="X-ray"/>
    <property type="resolution" value="2.70 A"/>
    <property type="chains" value="A=2-400"/>
</dbReference>
<dbReference type="PDB" id="1K03">
    <property type="method" value="X-ray"/>
    <property type="resolution" value="2.70 A"/>
    <property type="chains" value="A=2-400"/>
</dbReference>
<dbReference type="PDB" id="1OYA">
    <property type="method" value="X-ray"/>
    <property type="resolution" value="2.00 A"/>
    <property type="chains" value="A=1-400"/>
</dbReference>
<dbReference type="PDB" id="1OYB">
    <property type="method" value="X-ray"/>
    <property type="resolution" value="2.00 A"/>
    <property type="chains" value="A=1-400"/>
</dbReference>
<dbReference type="PDB" id="1OYC">
    <property type="method" value="X-ray"/>
    <property type="resolution" value="2.00 A"/>
    <property type="chains" value="A=1-400"/>
</dbReference>
<dbReference type="PDB" id="3RND">
    <property type="method" value="X-ray"/>
    <property type="resolution" value="1.40 A"/>
    <property type="chains" value="A=2-400"/>
</dbReference>
<dbReference type="PDB" id="3TX9">
    <property type="method" value="X-ray"/>
    <property type="resolution" value="2.00 A"/>
    <property type="chains" value="A=1-400"/>
</dbReference>
<dbReference type="PDB" id="3TXZ">
    <property type="method" value="X-ray"/>
    <property type="resolution" value="1.70 A"/>
    <property type="chains" value="A=1-400"/>
</dbReference>
<dbReference type="PDB" id="4GBU">
    <property type="method" value="X-ray"/>
    <property type="resolution" value="1.18 A"/>
    <property type="chains" value="A=1-400"/>
</dbReference>
<dbReference type="PDB" id="4GE8">
    <property type="method" value="X-ray"/>
    <property type="resolution" value="1.50 A"/>
    <property type="chains" value="A=1-400"/>
</dbReference>
<dbReference type="PDB" id="4GWE">
    <property type="method" value="X-ray"/>
    <property type="resolution" value="1.45 A"/>
    <property type="chains" value="A=1-400"/>
</dbReference>
<dbReference type="PDB" id="4GXM">
    <property type="method" value="X-ray"/>
    <property type="resolution" value="1.36 A"/>
    <property type="chains" value="A=1-400"/>
</dbReference>
<dbReference type="PDB" id="4H4I">
    <property type="method" value="X-ray"/>
    <property type="resolution" value="1.25 A"/>
    <property type="chains" value="A=1-400"/>
</dbReference>
<dbReference type="PDB" id="4H6K">
    <property type="method" value="X-ray"/>
    <property type="resolution" value="1.55 A"/>
    <property type="chains" value="A=2-400"/>
</dbReference>
<dbReference type="PDB" id="4K7V">
    <property type="method" value="X-ray"/>
    <property type="resolution" value="1.52 A"/>
    <property type="chains" value="A=1-400"/>
</dbReference>
<dbReference type="PDB" id="4K7Y">
    <property type="method" value="X-ray"/>
    <property type="resolution" value="1.20 A"/>
    <property type="chains" value="A=1-400"/>
</dbReference>
<dbReference type="PDB" id="4K8E">
    <property type="method" value="X-ray"/>
    <property type="resolution" value="1.27 A"/>
    <property type="chains" value="A=1-400"/>
</dbReference>
<dbReference type="PDB" id="4K8H">
    <property type="method" value="X-ray"/>
    <property type="resolution" value="1.55 A"/>
    <property type="chains" value="A=1-400"/>
</dbReference>
<dbReference type="PDB" id="4RNU">
    <property type="method" value="X-ray"/>
    <property type="resolution" value="2.68 A"/>
    <property type="chains" value="A/B/C/D=2-397"/>
</dbReference>
<dbReference type="PDB" id="4RNV">
    <property type="method" value="X-ray"/>
    <property type="resolution" value="2.47 A"/>
    <property type="chains" value="A/B/C/D=2-397"/>
</dbReference>
<dbReference type="PDB" id="4RNW">
    <property type="method" value="X-ray"/>
    <property type="resolution" value="1.55 A"/>
    <property type="chains" value="A/B=2-292, A/B=307-397"/>
</dbReference>
<dbReference type="PDB" id="4RNX">
    <property type="method" value="X-ray"/>
    <property type="resolution" value="1.25 A"/>
    <property type="chains" value="A/B=2-397"/>
</dbReference>
<dbReference type="PDB" id="4YIL">
    <property type="method" value="X-ray"/>
    <property type="resolution" value="1.46 A"/>
    <property type="chains" value="A=2-398"/>
</dbReference>
<dbReference type="PDB" id="4YNC">
    <property type="method" value="X-ray"/>
    <property type="resolution" value="1.50 A"/>
    <property type="chains" value="A=2-398"/>
</dbReference>
<dbReference type="PDBsum" id="1BWK"/>
<dbReference type="PDBsum" id="1BWL"/>
<dbReference type="PDBsum" id="1K02"/>
<dbReference type="PDBsum" id="1K03"/>
<dbReference type="PDBsum" id="1OYA"/>
<dbReference type="PDBsum" id="1OYB"/>
<dbReference type="PDBsum" id="1OYC"/>
<dbReference type="PDBsum" id="3RND"/>
<dbReference type="PDBsum" id="3TX9"/>
<dbReference type="PDBsum" id="3TXZ"/>
<dbReference type="PDBsum" id="4GBU"/>
<dbReference type="PDBsum" id="4GE8"/>
<dbReference type="PDBsum" id="4GWE"/>
<dbReference type="PDBsum" id="4GXM"/>
<dbReference type="PDBsum" id="4H4I"/>
<dbReference type="PDBsum" id="4H6K"/>
<dbReference type="PDBsum" id="4K7V"/>
<dbReference type="PDBsum" id="4K7Y"/>
<dbReference type="PDBsum" id="4K8E"/>
<dbReference type="PDBsum" id="4K8H"/>
<dbReference type="PDBsum" id="4RNU"/>
<dbReference type="PDBsum" id="4RNV"/>
<dbReference type="PDBsum" id="4RNW"/>
<dbReference type="PDBsum" id="4RNX"/>
<dbReference type="PDBsum" id="4YIL"/>
<dbReference type="PDBsum" id="4YNC"/>
<dbReference type="SMR" id="Q02899"/>
<dbReference type="OrthoDB" id="276546at2759"/>
<dbReference type="EvolutionaryTrace" id="Q02899"/>
<dbReference type="GO" id="GO:0010181">
    <property type="term" value="F:FMN binding"/>
    <property type="evidence" value="ECO:0007669"/>
    <property type="project" value="InterPro"/>
</dbReference>
<dbReference type="GO" id="GO:0003959">
    <property type="term" value="F:NADPH dehydrogenase activity"/>
    <property type="evidence" value="ECO:0007669"/>
    <property type="project" value="UniProtKB-EC"/>
</dbReference>
<dbReference type="CDD" id="cd02933">
    <property type="entry name" value="OYE_like_FMN"/>
    <property type="match status" value="1"/>
</dbReference>
<dbReference type="FunFam" id="3.20.20.70:FF:000138">
    <property type="entry name" value="NADPH dehydrogenase 1"/>
    <property type="match status" value="1"/>
</dbReference>
<dbReference type="Gene3D" id="3.20.20.70">
    <property type="entry name" value="Aldolase class I"/>
    <property type="match status" value="1"/>
</dbReference>
<dbReference type="InterPro" id="IPR013785">
    <property type="entry name" value="Aldolase_TIM"/>
</dbReference>
<dbReference type="InterPro" id="IPR001155">
    <property type="entry name" value="OxRdtase_FMN_N"/>
</dbReference>
<dbReference type="InterPro" id="IPR045247">
    <property type="entry name" value="Oye-like"/>
</dbReference>
<dbReference type="PANTHER" id="PTHR22893">
    <property type="entry name" value="NADH OXIDOREDUCTASE-RELATED"/>
    <property type="match status" value="1"/>
</dbReference>
<dbReference type="PANTHER" id="PTHR22893:SF91">
    <property type="entry name" value="NADPH DEHYDROGENASE 2-RELATED"/>
    <property type="match status" value="1"/>
</dbReference>
<dbReference type="Pfam" id="PF00724">
    <property type="entry name" value="Oxidored_FMN"/>
    <property type="match status" value="1"/>
</dbReference>
<dbReference type="SUPFAM" id="SSF51395">
    <property type="entry name" value="FMN-linked oxidoreductases"/>
    <property type="match status" value="1"/>
</dbReference>
<feature type="initiator methionine" description="Removed" evidence="2">
    <location>
        <position position="1"/>
    </location>
</feature>
<feature type="chain" id="PRO_0000194473" description="NADPH dehydrogenase 1">
    <location>
        <begin position="2"/>
        <end position="400"/>
    </location>
</feature>
<feature type="active site" description="Proton donor" evidence="12">
    <location>
        <position position="197"/>
    </location>
</feature>
<feature type="binding site" evidence="1 5 7">
    <location>
        <position position="38"/>
    </location>
    <ligand>
        <name>FMN</name>
        <dbReference type="ChEBI" id="CHEBI:58210"/>
    </ligand>
</feature>
<feature type="binding site" evidence="1 5 7">
    <location>
        <position position="115"/>
    </location>
    <ligand>
        <name>FMN</name>
        <dbReference type="ChEBI" id="CHEBI:58210"/>
    </ligand>
</feature>
<feature type="binding site" evidence="1 5">
    <location>
        <position position="192"/>
    </location>
    <ligand>
        <name>substrate</name>
    </ligand>
</feature>
<feature type="binding site" evidence="1 5">
    <location>
        <position position="195"/>
    </location>
    <ligand>
        <name>substrate</name>
    </ligand>
</feature>
<feature type="binding site" evidence="1 5 7">
    <location>
        <position position="244"/>
    </location>
    <ligand>
        <name>FMN</name>
        <dbReference type="ChEBI" id="CHEBI:58210"/>
    </ligand>
</feature>
<feature type="binding site" evidence="1 5 7">
    <location>
        <position position="349"/>
    </location>
    <ligand>
        <name>FMN</name>
        <dbReference type="ChEBI" id="CHEBI:58210"/>
    </ligand>
</feature>
<feature type="binding site" evidence="1 5">
    <location>
        <position position="376"/>
    </location>
    <ligand>
        <name>substrate</name>
    </ligand>
</feature>
<feature type="mutagenesis site" description="Strong reduction of substrate binding." evidence="1">
    <original>Q</original>
    <variation>N</variation>
    <location>
        <position position="115"/>
    </location>
</feature>
<feature type="mutagenesis site" description="Strong reduction of substrate binding. Reduced oxidation of NADPH." evidence="7">
    <original>H</original>
    <variation>N</variation>
    <location>
        <position position="192"/>
    </location>
</feature>
<feature type="mutagenesis site" description="Reduces oxidative half-reaction with 2-cyclohexenone 6-fold." evidence="8">
    <original>Y</original>
    <variation>F</variation>
    <location>
        <position position="197"/>
    </location>
</feature>
<feature type="strand" evidence="16">
    <location>
        <begin position="3"/>
        <end position="6"/>
    </location>
</feature>
<feature type="strand" evidence="16">
    <location>
        <begin position="13"/>
        <end position="15"/>
    </location>
</feature>
<feature type="helix" evidence="14">
    <location>
        <begin position="16"/>
        <end position="18"/>
    </location>
</feature>
<feature type="strand" evidence="14">
    <location>
        <begin position="21"/>
        <end position="23"/>
    </location>
</feature>
<feature type="strand" evidence="14">
    <location>
        <begin position="26"/>
        <end position="34"/>
    </location>
</feature>
<feature type="turn" evidence="14">
    <location>
        <begin position="44"/>
        <end position="47"/>
    </location>
</feature>
<feature type="turn" evidence="14">
    <location>
        <begin position="51"/>
        <end position="53"/>
    </location>
</feature>
<feature type="helix" evidence="14">
    <location>
        <begin position="54"/>
        <end position="61"/>
    </location>
</feature>
<feature type="strand" evidence="14">
    <location>
        <begin position="68"/>
        <end position="70"/>
    </location>
</feature>
<feature type="strand" evidence="14">
    <location>
        <begin position="74"/>
        <end position="77"/>
    </location>
</feature>
<feature type="helix" evidence="14">
    <location>
        <begin position="78"/>
        <end position="80"/>
    </location>
</feature>
<feature type="strand" evidence="14">
    <location>
        <begin position="88"/>
        <end position="91"/>
    </location>
</feature>
<feature type="helix" evidence="14">
    <location>
        <begin position="92"/>
        <end position="107"/>
    </location>
</feature>
<feature type="strand" evidence="14">
    <location>
        <begin position="111"/>
        <end position="117"/>
    </location>
</feature>
<feature type="helix" evidence="14">
    <location>
        <begin position="120"/>
        <end position="122"/>
    </location>
</feature>
<feature type="helix" evidence="14">
    <location>
        <begin position="125"/>
        <end position="130"/>
    </location>
</feature>
<feature type="strand" evidence="14">
    <location>
        <begin position="136"/>
        <end position="138"/>
    </location>
</feature>
<feature type="strand" evidence="15">
    <location>
        <begin position="140"/>
        <end position="142"/>
    </location>
</feature>
<feature type="helix" evidence="14">
    <location>
        <begin position="146"/>
        <end position="154"/>
    </location>
</feature>
<feature type="strand" evidence="17">
    <location>
        <begin position="159"/>
        <end position="161"/>
    </location>
</feature>
<feature type="helix" evidence="14">
    <location>
        <begin position="164"/>
        <end position="183"/>
    </location>
</feature>
<feature type="strand" evidence="14">
    <location>
        <begin position="187"/>
        <end position="192"/>
    </location>
</feature>
<feature type="helix" evidence="14">
    <location>
        <begin position="198"/>
        <end position="203"/>
    </location>
</feature>
<feature type="turn" evidence="14">
    <location>
        <begin position="205"/>
        <end position="207"/>
    </location>
</feature>
<feature type="strand" evidence="14">
    <location>
        <begin position="215"/>
        <end position="217"/>
    </location>
</feature>
<feature type="helix" evidence="14">
    <location>
        <begin position="218"/>
        <end position="221"/>
    </location>
</feature>
<feature type="helix" evidence="14">
    <location>
        <begin position="223"/>
        <end position="236"/>
    </location>
</feature>
<feature type="helix" evidence="14">
    <location>
        <begin position="238"/>
        <end position="240"/>
    </location>
</feature>
<feature type="strand" evidence="14">
    <location>
        <begin position="241"/>
        <end position="245"/>
    </location>
</feature>
<feature type="turn" evidence="14">
    <location>
        <begin position="251"/>
        <end position="253"/>
    </location>
</feature>
<feature type="helix" evidence="14">
    <location>
        <begin position="256"/>
        <end position="258"/>
    </location>
</feature>
<feature type="helix" evidence="14">
    <location>
        <begin position="262"/>
        <end position="278"/>
    </location>
</feature>
<feature type="strand" evidence="14">
    <location>
        <begin position="284"/>
        <end position="289"/>
    </location>
</feature>
<feature type="strand" evidence="13">
    <location>
        <begin position="296"/>
        <end position="298"/>
    </location>
</feature>
<feature type="turn" evidence="14">
    <location>
        <begin position="300"/>
        <end position="303"/>
    </location>
</feature>
<feature type="helix" evidence="14">
    <location>
        <begin position="312"/>
        <end position="316"/>
    </location>
</feature>
<feature type="strand" evidence="14">
    <location>
        <begin position="321"/>
        <end position="326"/>
    </location>
</feature>
<feature type="helix" evidence="14">
    <location>
        <begin position="331"/>
        <end position="337"/>
    </location>
</feature>
<feature type="strand" evidence="14">
    <location>
        <begin position="343"/>
        <end position="346"/>
    </location>
</feature>
<feature type="helix" evidence="14">
    <location>
        <begin position="349"/>
        <end position="353"/>
    </location>
</feature>
<feature type="helix" evidence="14">
    <location>
        <begin position="357"/>
        <end position="363"/>
    </location>
</feature>
<feature type="helix" evidence="14">
    <location>
        <begin position="372"/>
        <end position="374"/>
    </location>
</feature>
<feature type="strand" evidence="14">
    <location>
        <begin position="378"/>
        <end position="380"/>
    </location>
</feature>
<feature type="turn" evidence="14">
    <location>
        <begin position="381"/>
        <end position="383"/>
    </location>
</feature>
<feature type="helix" evidence="14">
    <location>
        <begin position="389"/>
        <end position="394"/>
    </location>
</feature>
<feature type="helix" evidence="14">
    <location>
        <begin position="397"/>
        <end position="399"/>
    </location>
</feature>
<organism>
    <name type="scientific">Saccharomyces pastorianus</name>
    <name type="common">Lager yeast</name>
    <name type="synonym">Saccharomyces cerevisiae x Saccharomyces eubayanus</name>
    <dbReference type="NCBI Taxonomy" id="27292"/>
    <lineage>
        <taxon>Eukaryota</taxon>
        <taxon>Fungi</taxon>
        <taxon>Dikarya</taxon>
        <taxon>Ascomycota</taxon>
        <taxon>Saccharomycotina</taxon>
        <taxon>Saccharomycetes</taxon>
        <taxon>Saccharomycetales</taxon>
        <taxon>Saccharomycetaceae</taxon>
        <taxon>Saccharomyces</taxon>
    </lineage>
</organism>
<comment type="function">
    <text evidence="3 7">Flavin-dependent enoate reductase that catalyzes the chemo- and stereoslective hydrogenation of electron-poor alkenes. The enzyme is reduced by NADPH, and oxygen, quinones, and alpha,beta-unsaturated aldehydes and ketones can act as electron acceptors to complete catalytic turnover. The physiological oxidant remains elusive.</text>
</comment>
<comment type="catalytic activity">
    <reaction evidence="7 11">
        <text>A + NADPH + H(+) = AH2 + NADP(+)</text>
        <dbReference type="Rhea" id="RHEA:13149"/>
        <dbReference type="ChEBI" id="CHEBI:13193"/>
        <dbReference type="ChEBI" id="CHEBI:15378"/>
        <dbReference type="ChEBI" id="CHEBI:17499"/>
        <dbReference type="ChEBI" id="CHEBI:57783"/>
        <dbReference type="ChEBI" id="CHEBI:58349"/>
        <dbReference type="EC" id="1.6.99.1"/>
    </reaction>
</comment>
<comment type="cofactor">
    <cofactor evidence="1 5 7 11">
        <name>FMN</name>
        <dbReference type="ChEBI" id="CHEBI:58210"/>
    </cofactor>
</comment>
<comment type="biophysicochemical properties">
    <kinetics>
        <KM evidence="3">11.4 uM for alpha-NADPH</KM>
        <KM evidence="3">7.7 uM for beta-NADPH</KM>
        <KM evidence="3">1.18 mM for oxygen (with alpha-NADPH a substrate)</KM>
        <KM evidence="3">0.88 mM for oxygen (with beta-NADPH a substrate)</KM>
    </kinetics>
</comment>
<comment type="subunit">
    <text evidence="1 5 7">Homodimer or heterodimer.</text>
</comment>
<comment type="mass spectrometry"/>
<comment type="similarity">
    <text evidence="10">Belongs to the NADH:flavin oxidoreductase/NADH oxidase family.</text>
</comment>
<keyword id="KW-0002">3D-structure</keyword>
<keyword id="KW-0903">Direct protein sequencing</keyword>
<keyword id="KW-0285">Flavoprotein</keyword>
<keyword id="KW-0288">FMN</keyword>
<keyword id="KW-0521">NADP</keyword>
<keyword id="KW-0560">Oxidoreductase</keyword>
<reference key="1">
    <citation type="journal article" date="1991" name="J. Biol. Chem.">
        <title>The cloning and expression of a gene encoding Old Yellow Enzyme from Saccharomyces carlsbergensis.</title>
        <authorList>
            <person name="Saito K."/>
            <person name="Thiele D.J."/>
            <person name="Davio M."/>
            <person name="Lockridge O."/>
            <person name="Massey V."/>
        </authorList>
    </citation>
    <scope>NUCLEOTIDE SEQUENCE [GENOMIC DNA]</scope>
    <scope>PROTEIN SEQUENCE OF 2-47</scope>
    <source>
        <strain>Brewer's bottom</strain>
    </source>
</reference>
<reference key="2">
    <citation type="journal article" date="1993" name="J. Biol. Chem.">
        <title>Old Yellow Enzyme. The discovery of multiple isozymes and a family of related proteins.</title>
        <authorList>
            <person name="Stott K."/>
            <person name="Saito K."/>
            <person name="Thiels D.J."/>
            <person name="Massey V."/>
        </authorList>
    </citation>
    <scope>PROTEIN SEQUENCE OF 2-37</scope>
    <scope>CLEAVAGE OF INITIATOR METHIONINE</scope>
    <scope>MASS SPECTROMETRY</scope>
</reference>
<reference key="3">
    <citation type="journal article" date="1986" name="J. Biol. Chem.">
        <title>Reactivity of old yellow enzyme with alpha-NADPH and other pyridine nucleotide derivatives.</title>
        <authorList>
            <person name="Massey V."/>
            <person name="Schopfer L.M."/>
        </authorList>
    </citation>
    <scope>FUNCTION</scope>
    <scope>CATALYTIC ACTIVITY</scope>
    <scope>BIOPHYSICOCHEMICAL PROPERTIES</scope>
</reference>
<reference key="4">
    <citation type="journal article" date="1995" name="J. Biol. Chem.">
        <title>A new old yellow enzyme of Saccharomyces cerevisiae.</title>
        <authorList>
            <person name="Niino Y.S."/>
            <person name="Chakraborty S."/>
            <person name="Brown B.J."/>
            <person name="Massey V."/>
        </authorList>
    </citation>
    <scope>MASS SPECTROMETRY</scope>
</reference>
<reference key="5">
    <citation type="journal article" date="1998" name="J. Biol. Chem.">
        <title>The oxidative half-reaction of Old Yellow Enzyme. The role of tyrosine 196.</title>
        <authorList>
            <person name="Kohli R.M."/>
            <person name="Massey V."/>
        </authorList>
    </citation>
    <scope>ACTIVE SITE</scope>
    <scope>MUTAGENESIS OF TYR-197</scope>
</reference>
<reference key="6">
    <citation type="journal article" date="1994" name="Structure">
        <title>Old yellow enzyme at 2-A resolution: overall structure, ligand binding, and comparison with related flavoproteins.</title>
        <authorList>
            <person name="Fox K.M."/>
            <person name="Karplus P.A."/>
        </authorList>
    </citation>
    <scope>X-RAY CRYSTALLOGRAPHY (2.0 ANGSTROMS) IN COMPLEX WITH FMN AND SUBSTRATE</scope>
</reference>
<reference key="7">
    <citation type="journal article" date="1998" name="J. Biol. Chem.">
        <title>On the active site of Old Yellow Enzyme. Role of histidine 191 and asparagine 194.</title>
        <authorList>
            <person name="Brown B.J."/>
            <person name="Deng Z."/>
            <person name="Karplus P.A."/>
            <person name="Massey V."/>
        </authorList>
    </citation>
    <scope>X-RAY CRYSTALLOGRAPHY (2.3 ANGSTROMS) IN COMPLEX WITH FMN</scope>
    <scope>MUTAGENESIS OF HIS-192</scope>
    <scope>FUNCTION</scope>
    <scope>CATALYTIC ACTIVITY</scope>
</reference>
<reference key="8">
    <citation type="journal article" date="2002" name="J. Biol. Chem.">
        <title>The role of glutamine 114 in Old Yellow Enzyme.</title>
        <authorList>
            <person name="Brown B.J."/>
            <person name="Hyun J.-W."/>
            <person name="Duvvuri S."/>
            <person name="Karplus P.A."/>
            <person name="Massey V."/>
        </authorList>
    </citation>
    <scope>X-RAY CRYSTALLOGRAPHY (2.7 ANGSTROMS) OF MUTANT ASN-115 IN COMPLEX WITH FMN AND SUBSTRATE</scope>
</reference>